<protein>
    <recommendedName>
        <fullName evidence="1">Large ribosomal subunit protein eL30</fullName>
    </recommendedName>
    <alternativeName>
        <fullName evidence="2">50S ribosomal protein L30e</fullName>
    </alternativeName>
</protein>
<evidence type="ECO:0000255" key="1">
    <source>
        <dbReference type="HAMAP-Rule" id="MF_00481"/>
    </source>
</evidence>
<evidence type="ECO:0000305" key="2"/>
<sequence>MVDISRELQVAISTGKVVMGFKEVKKTILTSTPKLVILAANAPKWAKEDVEYYAKLAGVPVFIFPGSSIELGAAAKRPHKIMALAVIDPGQSEILKLVEHA</sequence>
<keyword id="KW-0687">Ribonucleoprotein</keyword>
<keyword id="KW-0689">Ribosomal protein</keyword>
<gene>
    <name evidence="1" type="primary">rpl30e</name>
    <name type="ordered locus">Pisl_0700</name>
</gene>
<accession>A1RSE6</accession>
<reference key="1">
    <citation type="submission" date="2006-12" db="EMBL/GenBank/DDBJ databases">
        <title>Complete sequence of Pyrobaculum islandicum DSM 4184.</title>
        <authorList>
            <person name="Copeland A."/>
            <person name="Lucas S."/>
            <person name="Lapidus A."/>
            <person name="Barry K."/>
            <person name="Detter J.C."/>
            <person name="Glavina del Rio T."/>
            <person name="Dalin E."/>
            <person name="Tice H."/>
            <person name="Pitluck S."/>
            <person name="Meincke L."/>
            <person name="Brettin T."/>
            <person name="Bruce D."/>
            <person name="Han C."/>
            <person name="Tapia R."/>
            <person name="Gilna P."/>
            <person name="Schmutz J."/>
            <person name="Larimer F."/>
            <person name="Land M."/>
            <person name="Hauser L."/>
            <person name="Kyrpides N."/>
            <person name="Mikhailova N."/>
            <person name="Cozen A.E."/>
            <person name="Fitz-Gibbon S.T."/>
            <person name="House C.H."/>
            <person name="Saltikov C."/>
            <person name="Lowe T."/>
            <person name="Richardson P."/>
        </authorList>
    </citation>
    <scope>NUCLEOTIDE SEQUENCE [LARGE SCALE GENOMIC DNA]</scope>
    <source>
        <strain>DSM 4184 / JCM 9189 / GEO3</strain>
    </source>
</reference>
<organism>
    <name type="scientific">Pyrobaculum islandicum (strain DSM 4184 / JCM 9189 / GEO3)</name>
    <dbReference type="NCBI Taxonomy" id="384616"/>
    <lineage>
        <taxon>Archaea</taxon>
        <taxon>Thermoproteota</taxon>
        <taxon>Thermoprotei</taxon>
        <taxon>Thermoproteales</taxon>
        <taxon>Thermoproteaceae</taxon>
        <taxon>Pyrobaculum</taxon>
    </lineage>
</organism>
<comment type="similarity">
    <text evidence="1">Belongs to the eukaryotic ribosomal protein eL30 family.</text>
</comment>
<dbReference type="EMBL" id="CP000504">
    <property type="protein sequence ID" value="ABL87878.1"/>
    <property type="molecule type" value="Genomic_DNA"/>
</dbReference>
<dbReference type="RefSeq" id="WP_011762454.1">
    <property type="nucleotide sequence ID" value="NC_008701.1"/>
</dbReference>
<dbReference type="SMR" id="A1RSE6"/>
<dbReference type="STRING" id="384616.Pisl_0700"/>
<dbReference type="GeneID" id="4618237"/>
<dbReference type="KEGG" id="pis:Pisl_0700"/>
<dbReference type="eggNOG" id="arCOG01752">
    <property type="taxonomic scope" value="Archaea"/>
</dbReference>
<dbReference type="HOGENOM" id="CLU_130502_1_0_2"/>
<dbReference type="OrthoDB" id="10759at2157"/>
<dbReference type="Proteomes" id="UP000002595">
    <property type="component" value="Chromosome"/>
</dbReference>
<dbReference type="GO" id="GO:0022625">
    <property type="term" value="C:cytosolic large ribosomal subunit"/>
    <property type="evidence" value="ECO:0007669"/>
    <property type="project" value="InterPro"/>
</dbReference>
<dbReference type="GO" id="GO:0003723">
    <property type="term" value="F:RNA binding"/>
    <property type="evidence" value="ECO:0007669"/>
    <property type="project" value="InterPro"/>
</dbReference>
<dbReference type="GO" id="GO:0003735">
    <property type="term" value="F:structural constituent of ribosome"/>
    <property type="evidence" value="ECO:0007669"/>
    <property type="project" value="InterPro"/>
</dbReference>
<dbReference type="GO" id="GO:0006412">
    <property type="term" value="P:translation"/>
    <property type="evidence" value="ECO:0007669"/>
    <property type="project" value="UniProtKB-UniRule"/>
</dbReference>
<dbReference type="Gene3D" id="3.30.1330.30">
    <property type="match status" value="1"/>
</dbReference>
<dbReference type="HAMAP" id="MF_00481">
    <property type="entry name" value="Ribosomal_eL30"/>
    <property type="match status" value="1"/>
</dbReference>
<dbReference type="InterPro" id="IPR000231">
    <property type="entry name" value="Ribosomal_eL30"/>
</dbReference>
<dbReference type="InterPro" id="IPR039109">
    <property type="entry name" value="Ribosomal_eL30-like"/>
</dbReference>
<dbReference type="InterPro" id="IPR029064">
    <property type="entry name" value="Ribosomal_eL30-like_sf"/>
</dbReference>
<dbReference type="InterPro" id="IPR022991">
    <property type="entry name" value="Ribosomal_eL30_CS"/>
</dbReference>
<dbReference type="InterPro" id="IPR004038">
    <property type="entry name" value="Ribosomal_eL8/eL30/eS12/Gad45"/>
</dbReference>
<dbReference type="NCBIfam" id="NF002172">
    <property type="entry name" value="PRK01018.1"/>
    <property type="match status" value="1"/>
</dbReference>
<dbReference type="PANTHER" id="PTHR11449">
    <property type="entry name" value="RIBOSOMAL PROTEIN L30"/>
    <property type="match status" value="1"/>
</dbReference>
<dbReference type="Pfam" id="PF01248">
    <property type="entry name" value="Ribosomal_L7Ae"/>
    <property type="match status" value="1"/>
</dbReference>
<dbReference type="SUPFAM" id="SSF55315">
    <property type="entry name" value="L30e-like"/>
    <property type="match status" value="1"/>
</dbReference>
<dbReference type="PROSITE" id="PS00993">
    <property type="entry name" value="RIBOSOMAL_L30E_2"/>
    <property type="match status" value="1"/>
</dbReference>
<name>RL30E_PYRIL</name>
<feature type="chain" id="PRO_1000014328" description="Large ribosomal subunit protein eL30">
    <location>
        <begin position="1"/>
        <end position="101"/>
    </location>
</feature>
<proteinExistence type="inferred from homology"/>